<proteinExistence type="evidence at protein level"/>
<dbReference type="EMBL" id="M27878">
    <property type="protein sequence ID" value="AAA79359.1"/>
    <property type="molecule type" value="mRNA"/>
</dbReference>
<dbReference type="EMBL" id="X60156">
    <property type="protein sequence ID" value="CAB94232.2"/>
    <property type="molecule type" value="mRNA"/>
</dbReference>
<dbReference type="EMBL" id="AK314232">
    <property type="protein sequence ID" value="BAG36902.1"/>
    <property type="molecule type" value="mRNA"/>
</dbReference>
<dbReference type="EMBL" id="CH471218">
    <property type="protein sequence ID" value="EAW54799.1"/>
    <property type="molecule type" value="Genomic_DNA"/>
</dbReference>
<dbReference type="EMBL" id="CH471218">
    <property type="protein sequence ID" value="EAW54801.1"/>
    <property type="molecule type" value="Genomic_DNA"/>
</dbReference>
<dbReference type="EMBL" id="CH471218">
    <property type="protein sequence ID" value="EAW54802.1"/>
    <property type="molecule type" value="Genomic_DNA"/>
</dbReference>
<dbReference type="EMBL" id="BC036656">
    <property type="protein sequence ID" value="AAH36656.1"/>
    <property type="molecule type" value="mRNA"/>
</dbReference>
<dbReference type="EMBL" id="BC048350">
    <property type="protein sequence ID" value="AAH48350.2"/>
    <property type="molecule type" value="mRNA"/>
</dbReference>
<dbReference type="EMBL" id="BC062552">
    <property type="protein sequence ID" value="AAH62552.1"/>
    <property type="molecule type" value="mRNA"/>
</dbReference>
<dbReference type="CCDS" id="CCDS31940.1"/>
<dbReference type="PIR" id="B32891">
    <property type="entry name" value="B32891"/>
</dbReference>
<dbReference type="RefSeq" id="NP_001120844.1">
    <property type="nucleotide sequence ID" value="NM_001127372.3"/>
</dbReference>
<dbReference type="RefSeq" id="NP_001276900.1">
    <property type="nucleotide sequence ID" value="NM_001289971.2"/>
</dbReference>
<dbReference type="RefSeq" id="NP_001276901.1">
    <property type="nucleotide sequence ID" value="NM_001289972.2"/>
</dbReference>
<dbReference type="RefSeq" id="NP_003419.3">
    <property type="nucleotide sequence ID" value="NM_003428.6"/>
</dbReference>
<dbReference type="RefSeq" id="XP_005266242.1">
    <property type="nucleotide sequence ID" value="XM_005266185.2"/>
</dbReference>
<dbReference type="RefSeq" id="XP_005266243.1">
    <property type="nucleotide sequence ID" value="XM_005266186.2"/>
</dbReference>
<dbReference type="RefSeq" id="XP_011533134.1">
    <property type="nucleotide sequence ID" value="XM_011534832.2"/>
</dbReference>
<dbReference type="RefSeq" id="XP_047285460.1">
    <property type="nucleotide sequence ID" value="XM_047429504.1"/>
</dbReference>
<dbReference type="RefSeq" id="XP_047285461.1">
    <property type="nucleotide sequence ID" value="XM_047429505.1"/>
</dbReference>
<dbReference type="RefSeq" id="XP_047285462.1">
    <property type="nucleotide sequence ID" value="XM_047429506.1"/>
</dbReference>
<dbReference type="RefSeq" id="XP_047285463.1">
    <property type="nucleotide sequence ID" value="XM_047429507.1"/>
</dbReference>
<dbReference type="RefSeq" id="XP_047285464.1">
    <property type="nucleotide sequence ID" value="XM_047429508.1"/>
</dbReference>
<dbReference type="RefSeq" id="XP_047285465.1">
    <property type="nucleotide sequence ID" value="XM_047429509.1"/>
</dbReference>
<dbReference type="RefSeq" id="XP_047285466.1">
    <property type="nucleotide sequence ID" value="XM_047429510.1"/>
</dbReference>
<dbReference type="RefSeq" id="XP_047285467.1">
    <property type="nucleotide sequence ID" value="XM_047429511.1"/>
</dbReference>
<dbReference type="RefSeq" id="XP_054229110.1">
    <property type="nucleotide sequence ID" value="XM_054373135.1"/>
</dbReference>
<dbReference type="RefSeq" id="XP_054229111.1">
    <property type="nucleotide sequence ID" value="XM_054373136.1"/>
</dbReference>
<dbReference type="RefSeq" id="XP_054229112.1">
    <property type="nucleotide sequence ID" value="XM_054373137.1"/>
</dbReference>
<dbReference type="RefSeq" id="XP_054229113.1">
    <property type="nucleotide sequence ID" value="XM_054373138.1"/>
</dbReference>
<dbReference type="RefSeq" id="XP_054229114.1">
    <property type="nucleotide sequence ID" value="XM_054373139.1"/>
</dbReference>
<dbReference type="RefSeq" id="XP_054229115.1">
    <property type="nucleotide sequence ID" value="XM_054373140.1"/>
</dbReference>
<dbReference type="RefSeq" id="XP_054229116.1">
    <property type="nucleotide sequence ID" value="XM_054373141.1"/>
</dbReference>
<dbReference type="RefSeq" id="XP_054229117.1">
    <property type="nucleotide sequence ID" value="XM_054373142.1"/>
</dbReference>
<dbReference type="RefSeq" id="XP_054229118.1">
    <property type="nucleotide sequence ID" value="XM_054373143.1"/>
</dbReference>
<dbReference type="SMR" id="P51523"/>
<dbReference type="BioGRID" id="113453">
    <property type="interactions" value="13"/>
</dbReference>
<dbReference type="FunCoup" id="P51523">
    <property type="interactions" value="450"/>
</dbReference>
<dbReference type="IntAct" id="P51523">
    <property type="interactions" value="12"/>
</dbReference>
<dbReference type="MINT" id="P51523"/>
<dbReference type="STRING" id="9606.ENSP00000331465"/>
<dbReference type="GlyGen" id="P51523">
    <property type="glycosylation" value="1 site, 1 O-linked glycan (1 site)"/>
</dbReference>
<dbReference type="iPTMnet" id="P51523"/>
<dbReference type="PhosphoSitePlus" id="P51523"/>
<dbReference type="BioMuta" id="ZNF84"/>
<dbReference type="DMDM" id="94730445"/>
<dbReference type="jPOST" id="P51523"/>
<dbReference type="MassIVE" id="P51523"/>
<dbReference type="PaxDb" id="9606-ENSP00000331465"/>
<dbReference type="PeptideAtlas" id="P51523"/>
<dbReference type="ProteomicsDB" id="56321"/>
<dbReference type="Antibodypedia" id="19535">
    <property type="antibodies" value="28 antibodies from 13 providers"/>
</dbReference>
<dbReference type="DNASU" id="7637"/>
<dbReference type="Ensembl" id="ENST00000327668.11">
    <property type="protein sequence ID" value="ENSP00000331465.7"/>
    <property type="gene ID" value="ENSG00000198040.11"/>
</dbReference>
<dbReference type="Ensembl" id="ENST00000392319.6">
    <property type="protein sequence ID" value="ENSP00000376133.2"/>
    <property type="gene ID" value="ENSG00000198040.11"/>
</dbReference>
<dbReference type="Ensembl" id="ENST00000539354.6">
    <property type="protein sequence ID" value="ENSP00000445549.1"/>
    <property type="gene ID" value="ENSG00000198040.11"/>
</dbReference>
<dbReference type="GeneID" id="7637"/>
<dbReference type="KEGG" id="hsa:7637"/>
<dbReference type="MANE-Select" id="ENST00000539354.6">
    <property type="protein sequence ID" value="ENSP00000445549.1"/>
    <property type="RefSeq nucleotide sequence ID" value="NM_001289971.2"/>
    <property type="RefSeq protein sequence ID" value="NP_001276900.1"/>
</dbReference>
<dbReference type="UCSC" id="uc001ulm.5">
    <property type="organism name" value="human"/>
</dbReference>
<dbReference type="AGR" id="HGNC:13159"/>
<dbReference type="CTD" id="7637"/>
<dbReference type="DisGeNET" id="7637"/>
<dbReference type="GeneCards" id="ZNF84"/>
<dbReference type="HGNC" id="HGNC:13159">
    <property type="gene designation" value="ZNF84"/>
</dbReference>
<dbReference type="HPA" id="ENSG00000198040">
    <property type="expression patterns" value="Low tissue specificity"/>
</dbReference>
<dbReference type="MIM" id="618554">
    <property type="type" value="gene"/>
</dbReference>
<dbReference type="neXtProt" id="NX_P51523"/>
<dbReference type="OpenTargets" id="ENSG00000198040"/>
<dbReference type="PharmGKB" id="PA37732"/>
<dbReference type="VEuPathDB" id="HostDB:ENSG00000198040"/>
<dbReference type="eggNOG" id="KOG1721">
    <property type="taxonomic scope" value="Eukaryota"/>
</dbReference>
<dbReference type="GeneTree" id="ENSGT00940000162931"/>
<dbReference type="InParanoid" id="P51523"/>
<dbReference type="OMA" id="YEVMKPG"/>
<dbReference type="OrthoDB" id="654211at2759"/>
<dbReference type="PAN-GO" id="P51523">
    <property type="GO annotations" value="4 GO annotations based on evolutionary models"/>
</dbReference>
<dbReference type="PhylomeDB" id="P51523"/>
<dbReference type="TreeFam" id="TF337898"/>
<dbReference type="PathwayCommons" id="P51523"/>
<dbReference type="SignaLink" id="P51523"/>
<dbReference type="BioGRID-ORCS" id="7637">
    <property type="hits" value="41 hits in 1168 CRISPR screens"/>
</dbReference>
<dbReference type="ChiTaRS" id="ZNF84">
    <property type="organism name" value="human"/>
</dbReference>
<dbReference type="GenomeRNAi" id="7637"/>
<dbReference type="Pharos" id="P51523">
    <property type="development level" value="Tdark"/>
</dbReference>
<dbReference type="PRO" id="PR:P51523"/>
<dbReference type="Proteomes" id="UP000005640">
    <property type="component" value="Chromosome 12"/>
</dbReference>
<dbReference type="RNAct" id="P51523">
    <property type="molecule type" value="protein"/>
</dbReference>
<dbReference type="Bgee" id="ENSG00000198040">
    <property type="expression patterns" value="Expressed in cortical plate and 197 other cell types or tissues"/>
</dbReference>
<dbReference type="ExpressionAtlas" id="P51523">
    <property type="expression patterns" value="baseline and differential"/>
</dbReference>
<dbReference type="GO" id="GO:0005634">
    <property type="term" value="C:nucleus"/>
    <property type="evidence" value="ECO:0007669"/>
    <property type="project" value="UniProtKB-SubCell"/>
</dbReference>
<dbReference type="GO" id="GO:0003677">
    <property type="term" value="F:DNA binding"/>
    <property type="evidence" value="ECO:0000303"/>
    <property type="project" value="UniProtKB"/>
</dbReference>
<dbReference type="GO" id="GO:0008270">
    <property type="term" value="F:zinc ion binding"/>
    <property type="evidence" value="ECO:0000303"/>
    <property type="project" value="UniProtKB"/>
</dbReference>
<dbReference type="GO" id="GO:0006355">
    <property type="term" value="P:regulation of DNA-templated transcription"/>
    <property type="evidence" value="ECO:0007669"/>
    <property type="project" value="InterPro"/>
</dbReference>
<dbReference type="CDD" id="cd07765">
    <property type="entry name" value="KRAB_A-box"/>
    <property type="match status" value="1"/>
</dbReference>
<dbReference type="FunFam" id="3.30.160.60:FF:000824">
    <property type="entry name" value="Zinc finger protein 184"/>
    <property type="match status" value="4"/>
</dbReference>
<dbReference type="FunFam" id="3.30.160.60:FF:000295">
    <property type="entry name" value="zinc finger protein 19"/>
    <property type="match status" value="1"/>
</dbReference>
<dbReference type="FunFam" id="3.30.160.60:FF:000128">
    <property type="entry name" value="zinc finger protein 268 isoform X1"/>
    <property type="match status" value="1"/>
</dbReference>
<dbReference type="FunFam" id="3.30.160.60:FF:002343">
    <property type="entry name" value="Zinc finger protein 33A"/>
    <property type="match status" value="3"/>
</dbReference>
<dbReference type="FunFam" id="3.30.160.60:FF:000016">
    <property type="entry name" value="zinc finger protein 37 homolog"/>
    <property type="match status" value="1"/>
</dbReference>
<dbReference type="FunFam" id="3.30.160.60:FF:001498">
    <property type="entry name" value="Zinc finger protein 404"/>
    <property type="match status" value="1"/>
</dbReference>
<dbReference type="FunFam" id="3.30.160.60:FF:002254">
    <property type="entry name" value="Zinc finger protein 540"/>
    <property type="match status" value="1"/>
</dbReference>
<dbReference type="FunFam" id="3.30.160.60:FF:000384">
    <property type="entry name" value="Zinc finger protein 550"/>
    <property type="match status" value="3"/>
</dbReference>
<dbReference type="FunFam" id="3.30.160.60:FF:000710">
    <property type="entry name" value="Zinc finger protein 768"/>
    <property type="match status" value="1"/>
</dbReference>
<dbReference type="FunFam" id="3.30.160.60:FF:000099">
    <property type="entry name" value="Zinc finger protein 79"/>
    <property type="match status" value="1"/>
</dbReference>
<dbReference type="FunFam" id="3.30.160.60:FF:001157">
    <property type="entry name" value="Zinc finger protein 793"/>
    <property type="match status" value="2"/>
</dbReference>
<dbReference type="Gene3D" id="6.10.140.140">
    <property type="match status" value="1"/>
</dbReference>
<dbReference type="Gene3D" id="3.30.160.60">
    <property type="entry name" value="Classic Zinc Finger"/>
    <property type="match status" value="19"/>
</dbReference>
<dbReference type="InterPro" id="IPR001909">
    <property type="entry name" value="KRAB"/>
</dbReference>
<dbReference type="InterPro" id="IPR036051">
    <property type="entry name" value="KRAB_dom_sf"/>
</dbReference>
<dbReference type="InterPro" id="IPR036236">
    <property type="entry name" value="Znf_C2H2_sf"/>
</dbReference>
<dbReference type="InterPro" id="IPR013087">
    <property type="entry name" value="Znf_C2H2_type"/>
</dbReference>
<dbReference type="PANTHER" id="PTHR24381">
    <property type="entry name" value="ZINC FINGER PROTEIN"/>
    <property type="match status" value="1"/>
</dbReference>
<dbReference type="PANTHER" id="PTHR24381:SF390">
    <property type="entry name" value="ZINC FINGER PROTEIN 37 HOMOLOG"/>
    <property type="match status" value="1"/>
</dbReference>
<dbReference type="Pfam" id="PF01352">
    <property type="entry name" value="KRAB"/>
    <property type="match status" value="1"/>
</dbReference>
<dbReference type="Pfam" id="PF00096">
    <property type="entry name" value="zf-C2H2"/>
    <property type="match status" value="19"/>
</dbReference>
<dbReference type="SMART" id="SM00349">
    <property type="entry name" value="KRAB"/>
    <property type="match status" value="1"/>
</dbReference>
<dbReference type="SMART" id="SM00355">
    <property type="entry name" value="ZnF_C2H2"/>
    <property type="match status" value="19"/>
</dbReference>
<dbReference type="SUPFAM" id="SSF57667">
    <property type="entry name" value="beta-beta-alpha zinc fingers"/>
    <property type="match status" value="10"/>
</dbReference>
<dbReference type="SUPFAM" id="SSF109640">
    <property type="entry name" value="KRAB domain (Kruppel-associated box)"/>
    <property type="match status" value="1"/>
</dbReference>
<dbReference type="PROSITE" id="PS50805">
    <property type="entry name" value="KRAB"/>
    <property type="match status" value="1"/>
</dbReference>
<dbReference type="PROSITE" id="PS00028">
    <property type="entry name" value="ZINC_FINGER_C2H2_1"/>
    <property type="match status" value="19"/>
</dbReference>
<dbReference type="PROSITE" id="PS50157">
    <property type="entry name" value="ZINC_FINGER_C2H2_2"/>
    <property type="match status" value="19"/>
</dbReference>
<keyword id="KW-0238">DNA-binding</keyword>
<keyword id="KW-1017">Isopeptide bond</keyword>
<keyword id="KW-0479">Metal-binding</keyword>
<keyword id="KW-0539">Nucleus</keyword>
<keyword id="KW-0597">Phosphoprotein</keyword>
<keyword id="KW-1267">Proteomics identification</keyword>
<keyword id="KW-1185">Reference proteome</keyword>
<keyword id="KW-0677">Repeat</keyword>
<keyword id="KW-0804">Transcription</keyword>
<keyword id="KW-0805">Transcription regulation</keyword>
<keyword id="KW-0832">Ubl conjugation</keyword>
<keyword id="KW-0862">Zinc</keyword>
<keyword id="KW-0863">Zinc-finger</keyword>
<accession>P51523</accession>
<accession>B2RAK5</accession>
<accession>D3DXJ1</accession>
<accession>Q3ZCV9</accession>
<accession>Q5D057</accession>
<accession>Q86XU8</accession>
<accession>Q9NNX7</accession>
<accession>Q9UC17</accession>
<accession>Q9UC18</accession>
<gene>
    <name type="primary">ZNF84</name>
</gene>
<reference key="1">
    <citation type="journal article" date="1989" name="DNA">
        <title>The human genome contains hundreds of genes coding for finger proteins of the Kruppel type.</title>
        <authorList>
            <person name="Bellefroid E.J."/>
            <person name="Lecocq P.J."/>
            <person name="Benhida A."/>
            <person name="Poncelet D.A."/>
            <person name="Belayew A."/>
            <person name="Martial J.A."/>
        </authorList>
    </citation>
    <scope>NUCLEOTIDE SEQUENCE [MRNA]</scope>
    <source>
        <tissue>Placenta</tissue>
    </source>
</reference>
<reference key="2">
    <citation type="submission" date="2002-02" db="EMBL/GenBank/DDBJ databases">
        <authorList>
            <person name="Grimaldi G."/>
        </authorList>
    </citation>
    <scope>NUCLEOTIDE SEQUENCE [MRNA]</scope>
</reference>
<reference key="3">
    <citation type="journal article" date="2004" name="Nat. Genet.">
        <title>Complete sequencing and characterization of 21,243 full-length human cDNAs.</title>
        <authorList>
            <person name="Ota T."/>
            <person name="Suzuki Y."/>
            <person name="Nishikawa T."/>
            <person name="Otsuki T."/>
            <person name="Sugiyama T."/>
            <person name="Irie R."/>
            <person name="Wakamatsu A."/>
            <person name="Hayashi K."/>
            <person name="Sato H."/>
            <person name="Nagai K."/>
            <person name="Kimura K."/>
            <person name="Makita H."/>
            <person name="Sekine M."/>
            <person name="Obayashi M."/>
            <person name="Nishi T."/>
            <person name="Shibahara T."/>
            <person name="Tanaka T."/>
            <person name="Ishii S."/>
            <person name="Yamamoto J."/>
            <person name="Saito K."/>
            <person name="Kawai Y."/>
            <person name="Isono Y."/>
            <person name="Nakamura Y."/>
            <person name="Nagahari K."/>
            <person name="Murakami K."/>
            <person name="Yasuda T."/>
            <person name="Iwayanagi T."/>
            <person name="Wagatsuma M."/>
            <person name="Shiratori A."/>
            <person name="Sudo H."/>
            <person name="Hosoiri T."/>
            <person name="Kaku Y."/>
            <person name="Kodaira H."/>
            <person name="Kondo H."/>
            <person name="Sugawara M."/>
            <person name="Takahashi M."/>
            <person name="Kanda K."/>
            <person name="Yokoi T."/>
            <person name="Furuya T."/>
            <person name="Kikkawa E."/>
            <person name="Omura Y."/>
            <person name="Abe K."/>
            <person name="Kamihara K."/>
            <person name="Katsuta N."/>
            <person name="Sato K."/>
            <person name="Tanikawa M."/>
            <person name="Yamazaki M."/>
            <person name="Ninomiya K."/>
            <person name="Ishibashi T."/>
            <person name="Yamashita H."/>
            <person name="Murakawa K."/>
            <person name="Fujimori K."/>
            <person name="Tanai H."/>
            <person name="Kimata M."/>
            <person name="Watanabe M."/>
            <person name="Hiraoka S."/>
            <person name="Chiba Y."/>
            <person name="Ishida S."/>
            <person name="Ono Y."/>
            <person name="Takiguchi S."/>
            <person name="Watanabe S."/>
            <person name="Yosida M."/>
            <person name="Hotuta T."/>
            <person name="Kusano J."/>
            <person name="Kanehori K."/>
            <person name="Takahashi-Fujii A."/>
            <person name="Hara H."/>
            <person name="Tanase T.-O."/>
            <person name="Nomura Y."/>
            <person name="Togiya S."/>
            <person name="Komai F."/>
            <person name="Hara R."/>
            <person name="Takeuchi K."/>
            <person name="Arita M."/>
            <person name="Imose N."/>
            <person name="Musashino K."/>
            <person name="Yuuki H."/>
            <person name="Oshima A."/>
            <person name="Sasaki N."/>
            <person name="Aotsuka S."/>
            <person name="Yoshikawa Y."/>
            <person name="Matsunawa H."/>
            <person name="Ichihara T."/>
            <person name="Shiohata N."/>
            <person name="Sano S."/>
            <person name="Moriya S."/>
            <person name="Momiyama H."/>
            <person name="Satoh N."/>
            <person name="Takami S."/>
            <person name="Terashima Y."/>
            <person name="Suzuki O."/>
            <person name="Nakagawa S."/>
            <person name="Senoh A."/>
            <person name="Mizoguchi H."/>
            <person name="Goto Y."/>
            <person name="Shimizu F."/>
            <person name="Wakebe H."/>
            <person name="Hishigaki H."/>
            <person name="Watanabe T."/>
            <person name="Sugiyama A."/>
            <person name="Takemoto M."/>
            <person name="Kawakami B."/>
            <person name="Yamazaki M."/>
            <person name="Watanabe K."/>
            <person name="Kumagai A."/>
            <person name="Itakura S."/>
            <person name="Fukuzumi Y."/>
            <person name="Fujimori Y."/>
            <person name="Komiyama M."/>
            <person name="Tashiro H."/>
            <person name="Tanigami A."/>
            <person name="Fujiwara T."/>
            <person name="Ono T."/>
            <person name="Yamada K."/>
            <person name="Fujii Y."/>
            <person name="Ozaki K."/>
            <person name="Hirao M."/>
            <person name="Ohmori Y."/>
            <person name="Kawabata A."/>
            <person name="Hikiji T."/>
            <person name="Kobatake N."/>
            <person name="Inagaki H."/>
            <person name="Ikema Y."/>
            <person name="Okamoto S."/>
            <person name="Okitani R."/>
            <person name="Kawakami T."/>
            <person name="Noguchi S."/>
            <person name="Itoh T."/>
            <person name="Shigeta K."/>
            <person name="Senba T."/>
            <person name="Matsumura K."/>
            <person name="Nakajima Y."/>
            <person name="Mizuno T."/>
            <person name="Morinaga M."/>
            <person name="Sasaki M."/>
            <person name="Togashi T."/>
            <person name="Oyama M."/>
            <person name="Hata H."/>
            <person name="Watanabe M."/>
            <person name="Komatsu T."/>
            <person name="Mizushima-Sugano J."/>
            <person name="Satoh T."/>
            <person name="Shirai Y."/>
            <person name="Takahashi Y."/>
            <person name="Nakagawa K."/>
            <person name="Okumura K."/>
            <person name="Nagase T."/>
            <person name="Nomura N."/>
            <person name="Kikuchi H."/>
            <person name="Masuho Y."/>
            <person name="Yamashita R."/>
            <person name="Nakai K."/>
            <person name="Yada T."/>
            <person name="Nakamura Y."/>
            <person name="Ohara O."/>
            <person name="Isogai T."/>
            <person name="Sugano S."/>
        </authorList>
    </citation>
    <scope>NUCLEOTIDE SEQUENCE [LARGE SCALE MRNA]</scope>
    <source>
        <tissue>Brain</tissue>
    </source>
</reference>
<reference key="4">
    <citation type="submission" date="2005-09" db="EMBL/GenBank/DDBJ databases">
        <authorList>
            <person name="Mural R.J."/>
            <person name="Istrail S."/>
            <person name="Sutton G.G."/>
            <person name="Florea L."/>
            <person name="Halpern A.L."/>
            <person name="Mobarry C.M."/>
            <person name="Lippert R."/>
            <person name="Walenz B."/>
            <person name="Shatkay H."/>
            <person name="Dew I."/>
            <person name="Miller J.R."/>
            <person name="Flanigan M.J."/>
            <person name="Edwards N.J."/>
            <person name="Bolanos R."/>
            <person name="Fasulo D."/>
            <person name="Halldorsson B.V."/>
            <person name="Hannenhalli S."/>
            <person name="Turner R."/>
            <person name="Yooseph S."/>
            <person name="Lu F."/>
            <person name="Nusskern D.R."/>
            <person name="Shue B.C."/>
            <person name="Zheng X.H."/>
            <person name="Zhong F."/>
            <person name="Delcher A.L."/>
            <person name="Huson D.H."/>
            <person name="Kravitz S.A."/>
            <person name="Mouchard L."/>
            <person name="Reinert K."/>
            <person name="Remington K.A."/>
            <person name="Clark A.G."/>
            <person name="Waterman M.S."/>
            <person name="Eichler E.E."/>
            <person name="Adams M.D."/>
            <person name="Hunkapiller M.W."/>
            <person name="Myers E.W."/>
            <person name="Venter J.C."/>
        </authorList>
    </citation>
    <scope>NUCLEOTIDE SEQUENCE [LARGE SCALE GENOMIC DNA]</scope>
</reference>
<reference key="5">
    <citation type="journal article" date="2004" name="Genome Res.">
        <title>The status, quality, and expansion of the NIH full-length cDNA project: the Mammalian Gene Collection (MGC).</title>
        <authorList>
            <consortium name="The MGC Project Team"/>
        </authorList>
    </citation>
    <scope>NUCLEOTIDE SEQUENCE [LARGE SCALE MRNA]</scope>
    <source>
        <tissue>Lung</tissue>
        <tissue>Testis</tissue>
        <tissue>Uterus</tissue>
    </source>
</reference>
<reference key="6">
    <citation type="journal article" date="1991" name="Nucleic Acids Res.">
        <title>Members of the zinc finger protein gene family sharing a conserved N-terminal module.</title>
        <authorList>
            <person name="Rosati M."/>
            <person name="Marino M."/>
            <person name="Franze A."/>
            <person name="Tramontano A."/>
            <person name="Grimaldi G."/>
        </authorList>
    </citation>
    <scope>NUCLEOTIDE SEQUENCE [MRNA] OF 1-257</scope>
    <source>
        <tissue>Teratocarcinoma</tissue>
    </source>
</reference>
<reference key="7">
    <citation type="journal article" date="2011" name="Sci. Signal.">
        <title>System-wide temporal characterization of the proteome and phosphoproteome of human embryonic stem cell differentiation.</title>
        <authorList>
            <person name="Rigbolt K.T."/>
            <person name="Prokhorova T.A."/>
            <person name="Akimov V."/>
            <person name="Henningsen J."/>
            <person name="Johansen P.T."/>
            <person name="Kratchmarova I."/>
            <person name="Kassem M."/>
            <person name="Mann M."/>
            <person name="Olsen J.V."/>
            <person name="Blagoev B."/>
        </authorList>
    </citation>
    <scope>PHOSPHORYLATION [LARGE SCALE ANALYSIS] AT SER-128</scope>
    <scope>IDENTIFICATION BY MASS SPECTROMETRY [LARGE SCALE ANALYSIS]</scope>
</reference>
<reference key="8">
    <citation type="journal article" date="2013" name="J. Proteome Res.">
        <title>Toward a comprehensive characterization of a human cancer cell phosphoproteome.</title>
        <authorList>
            <person name="Zhou H."/>
            <person name="Di Palma S."/>
            <person name="Preisinger C."/>
            <person name="Peng M."/>
            <person name="Polat A.N."/>
            <person name="Heck A.J."/>
            <person name="Mohammed S."/>
        </authorList>
    </citation>
    <scope>PHOSPHORYLATION [LARGE SCALE ANALYSIS] AT SER-128</scope>
    <scope>IDENTIFICATION BY MASS SPECTROMETRY [LARGE SCALE ANALYSIS]</scope>
    <source>
        <tissue>Cervix carcinoma</tissue>
        <tissue>Erythroleukemia</tissue>
    </source>
</reference>
<reference key="9">
    <citation type="journal article" date="2017" name="Nat. Struct. Mol. Biol.">
        <title>Site-specific mapping of the human SUMO proteome reveals co-modification with phosphorylation.</title>
        <authorList>
            <person name="Hendriks I.A."/>
            <person name="Lyon D."/>
            <person name="Young C."/>
            <person name="Jensen L.J."/>
            <person name="Vertegaal A.C."/>
            <person name="Nielsen M.L."/>
        </authorList>
    </citation>
    <scope>SUMOYLATION [LARGE SCALE ANALYSIS] AT LYS-112; LYS-125; LYS-191 AND LYS-457</scope>
    <scope>IDENTIFICATION BY MASS SPECTROMETRY [LARGE SCALE ANALYSIS]</scope>
</reference>
<protein>
    <recommendedName>
        <fullName>Zinc finger protein 84</fullName>
    </recommendedName>
    <alternativeName>
        <fullName>Zinc finger protein HPF2</fullName>
    </alternativeName>
</protein>
<name>ZNF84_HUMAN</name>
<feature type="chain" id="PRO_0000047397" description="Zinc finger protein 84">
    <location>
        <begin position="1"/>
        <end position="738"/>
    </location>
</feature>
<feature type="domain" description="KRAB" evidence="2">
    <location>
        <begin position="8"/>
        <end position="79"/>
    </location>
</feature>
<feature type="zinc finger region" description="C2H2-type 1" evidence="1">
    <location>
        <begin position="207"/>
        <end position="229"/>
    </location>
</feature>
<feature type="zinc finger region" description="C2H2-type 2" evidence="1">
    <location>
        <begin position="235"/>
        <end position="257"/>
    </location>
</feature>
<feature type="zinc finger region" description="C2H2-type 3" evidence="1">
    <location>
        <begin position="263"/>
        <end position="285"/>
    </location>
</feature>
<feature type="zinc finger region" description="C2H2-type 4" evidence="1">
    <location>
        <begin position="291"/>
        <end position="313"/>
    </location>
</feature>
<feature type="zinc finger region" description="C2H2-type 5" evidence="1">
    <location>
        <begin position="319"/>
        <end position="341"/>
    </location>
</feature>
<feature type="zinc finger region" description="C2H2-type 6" evidence="1">
    <location>
        <begin position="347"/>
        <end position="369"/>
    </location>
</feature>
<feature type="zinc finger region" description="C2H2-type 7" evidence="1">
    <location>
        <begin position="375"/>
        <end position="397"/>
    </location>
</feature>
<feature type="zinc finger region" description="C2H2-type 8" evidence="1">
    <location>
        <begin position="403"/>
        <end position="425"/>
    </location>
</feature>
<feature type="zinc finger region" description="C2H2-type 9" evidence="1">
    <location>
        <begin position="431"/>
        <end position="453"/>
    </location>
</feature>
<feature type="zinc finger region" description="C2H2-type 10" evidence="1">
    <location>
        <begin position="459"/>
        <end position="481"/>
    </location>
</feature>
<feature type="zinc finger region" description="C2H2-type 11" evidence="1">
    <location>
        <begin position="487"/>
        <end position="509"/>
    </location>
</feature>
<feature type="zinc finger region" description="C2H2-type 12" evidence="1">
    <location>
        <begin position="515"/>
        <end position="537"/>
    </location>
</feature>
<feature type="zinc finger region" description="C2H2-type 13" evidence="1">
    <location>
        <begin position="543"/>
        <end position="565"/>
    </location>
</feature>
<feature type="zinc finger region" description="C2H2-type 14" evidence="1">
    <location>
        <begin position="571"/>
        <end position="593"/>
    </location>
</feature>
<feature type="zinc finger region" description="C2H2-type 15" evidence="1">
    <location>
        <begin position="599"/>
        <end position="621"/>
    </location>
</feature>
<feature type="zinc finger region" description="C2H2-type 16" evidence="1">
    <location>
        <begin position="627"/>
        <end position="649"/>
    </location>
</feature>
<feature type="zinc finger region" description="C2H2-type 17" evidence="1">
    <location>
        <begin position="655"/>
        <end position="677"/>
    </location>
</feature>
<feature type="zinc finger region" description="C2H2-type 18" evidence="1">
    <location>
        <begin position="683"/>
        <end position="705"/>
    </location>
</feature>
<feature type="zinc finger region" description="C2H2-type 19" evidence="1">
    <location>
        <begin position="711"/>
        <end position="733"/>
    </location>
</feature>
<feature type="modified residue" description="Phosphoserine" evidence="4 5">
    <location>
        <position position="128"/>
    </location>
</feature>
<feature type="cross-link" description="Glycyl lysine isopeptide (Lys-Gly) (interchain with G-Cter in SUMO2)" evidence="6">
    <location>
        <position position="112"/>
    </location>
</feature>
<feature type="cross-link" description="Glycyl lysine isopeptide (Lys-Gly) (interchain with G-Cter in SUMO2)" evidence="6">
    <location>
        <position position="125"/>
    </location>
</feature>
<feature type="cross-link" description="Glycyl lysine isopeptide (Lys-Gly) (interchain with G-Cter in SUMO2)" evidence="6">
    <location>
        <position position="191"/>
    </location>
</feature>
<feature type="cross-link" description="Glycyl lysine isopeptide (Lys-Gly) (interchain with G-Cter in SUMO2)" evidence="6">
    <location>
        <position position="457"/>
    </location>
</feature>
<feature type="sequence conflict" description="In Ref. 1; AAA79359." evidence="3" ref="1">
    <original>Q</original>
    <variation>E</variation>
    <location>
        <position position="62"/>
    </location>
</feature>
<feature type="sequence conflict" description="In Ref. 5; AAH36656." evidence="3" ref="5">
    <original>T</original>
    <variation>A</variation>
    <location>
        <position position="594"/>
    </location>
</feature>
<sequence>MTMLQESFSFDDLSVDFTQKEWQLLDPSQKNLYKDVMLENYSSLVSLGYEVMKPDVIFKLEQGEEPWVGDGEIPSSDSPEVWKVDGNMMWHQDNQDKLKIIKRGHECDAFGKNFNLNMNFVPLRKSNSEGDLDGLILKHHLDLLIPKGDYGKAESDDFNVFDNFFLHSKPEDTDTWLKYYDCDKYKESYKKSQIIIYHRNRLGEKLYECSECRKRFSKKPSLIKHQSRHIRDIAFGCGNCGKTFPQKSQFITHHRTHTGEKPYNCSQCGKAFSQKSQLTSHQRTHTGEKPYECGECGKAFSRKSHLISHWRTHTGEKPYGCNECGRAFSEKSNLINHQRIHTGEKPFECRECGKAFSRKSQLVTHHRTHTGTKPFGCSDCRKAFFEKSELIRHQTIHTGEKPYECSECRKAFRERSSLINHQRTHTGEKPHGCIQCGKAFSQKSHLISHQMTHTGEKPFICSKCGKAFSRKSQLVRHQRTHTGEKPYECSECGKAFSEKLSLTNHQRIHTGEKPYVCSECGKAFCQKSHLISHQRTHTGEKPYECSECGKAFGEKSSLATHQRTHTGEKPYECRDCEKAFSQKSQLNTHQRIHTGEKPYECSLCRKAFFEKSELIRHLRTHTGEKPYECNECRKAFREKSSLINHQRIHTGEKPFECSECGKAFSRKSHLIPHQRTHTGEKPYGCSECRKAFSQKSQLVNHQRIHTGEKPYRCIECGKAFSQKSQLINHQRTHTVKKS</sequence>
<evidence type="ECO:0000255" key="1">
    <source>
        <dbReference type="PROSITE-ProRule" id="PRU00042"/>
    </source>
</evidence>
<evidence type="ECO:0000255" key="2">
    <source>
        <dbReference type="PROSITE-ProRule" id="PRU00119"/>
    </source>
</evidence>
<evidence type="ECO:0000305" key="3"/>
<evidence type="ECO:0007744" key="4">
    <source>
    </source>
</evidence>
<evidence type="ECO:0007744" key="5">
    <source>
    </source>
</evidence>
<evidence type="ECO:0007744" key="6">
    <source>
    </source>
</evidence>
<comment type="function">
    <text>May be involved in transcriptional regulation.</text>
</comment>
<comment type="interaction">
    <interactant intactId="EBI-2849074">
        <id>P51523</id>
    </interactant>
    <interactant intactId="EBI-7116203">
        <id>O75031</id>
        <label>HSF2BP</label>
    </interactant>
    <organismsDiffer>false</organismsDiffer>
    <experiments>3</experiments>
</comment>
<comment type="interaction">
    <interactant intactId="EBI-2849074">
        <id>P51523</id>
    </interactant>
    <interactant intactId="EBI-8639312">
        <id>P25800</id>
        <label>LMO1</label>
    </interactant>
    <organismsDiffer>false</organismsDiffer>
    <experiments>3</experiments>
</comment>
<comment type="interaction">
    <interactant intactId="EBI-2849074">
        <id>P51523</id>
    </interactant>
    <interactant intactId="EBI-11742507">
        <id>Q8TAP4-4</id>
        <label>LMO3</label>
    </interactant>
    <organismsDiffer>false</organismsDiffer>
    <experiments>3</experiments>
</comment>
<comment type="interaction">
    <interactant intactId="EBI-2849074">
        <id>P51523</id>
    </interactant>
    <interactant intactId="EBI-12023934">
        <id>Q5MJ10</id>
        <label>SPANXN2</label>
    </interactant>
    <organismsDiffer>false</organismsDiffer>
    <experiments>3</experiments>
</comment>
<comment type="interaction">
    <interactant intactId="EBI-2849074">
        <id>P51523</id>
    </interactant>
    <interactant intactId="EBI-78139">
        <id>Q13263</id>
        <label>TRIM28</label>
    </interactant>
    <organismsDiffer>false</organismsDiffer>
    <experiments>4</experiments>
</comment>
<comment type="subcellular location">
    <subcellularLocation>
        <location evidence="3">Nucleus</location>
    </subcellularLocation>
</comment>
<comment type="similarity">
    <text evidence="3">Belongs to the krueppel C2H2-type zinc-finger protein family.</text>
</comment>
<organism>
    <name type="scientific">Homo sapiens</name>
    <name type="common">Human</name>
    <dbReference type="NCBI Taxonomy" id="9606"/>
    <lineage>
        <taxon>Eukaryota</taxon>
        <taxon>Metazoa</taxon>
        <taxon>Chordata</taxon>
        <taxon>Craniata</taxon>
        <taxon>Vertebrata</taxon>
        <taxon>Euteleostomi</taxon>
        <taxon>Mammalia</taxon>
        <taxon>Eutheria</taxon>
        <taxon>Euarchontoglires</taxon>
        <taxon>Primates</taxon>
        <taxon>Haplorrhini</taxon>
        <taxon>Catarrhini</taxon>
        <taxon>Hominidae</taxon>
        <taxon>Homo</taxon>
    </lineage>
</organism>